<gene>
    <name type="primary">NPAS2</name>
    <name type="synonym">BHLHE9</name>
    <name type="synonym">MOP4</name>
    <name type="synonym">PASD4</name>
</gene>
<dbReference type="EMBL" id="U77970">
    <property type="protein sequence ID" value="AAB47250.1"/>
    <property type="molecule type" value="mRNA"/>
</dbReference>
<dbReference type="EMBL" id="AC016738">
    <property type="protein sequence ID" value="AAY14822.1"/>
    <property type="molecule type" value="Genomic_DNA"/>
</dbReference>
<dbReference type="EMBL" id="AC092168">
    <property type="status" value="NOT_ANNOTATED_CDS"/>
    <property type="molecule type" value="Genomic_DNA"/>
</dbReference>
<dbReference type="EMBL" id="AC106891">
    <property type="protein sequence ID" value="AAX88966.1"/>
    <property type="molecule type" value="Genomic_DNA"/>
</dbReference>
<dbReference type="EMBL" id="BC051351">
    <property type="protein sequence ID" value="AAH51351.2"/>
    <property type="molecule type" value="mRNA"/>
</dbReference>
<dbReference type="EMBL" id="BC072383">
    <property type="protein sequence ID" value="AAH72383.1"/>
    <property type="molecule type" value="mRNA"/>
</dbReference>
<dbReference type="EMBL" id="U51625">
    <property type="protein sequence ID" value="AAC51211.1"/>
    <property type="molecule type" value="mRNA"/>
</dbReference>
<dbReference type="CCDS" id="CCDS2048.1"/>
<dbReference type="RefSeq" id="NP_002509.2">
    <property type="nucleotide sequence ID" value="NM_002518.3"/>
</dbReference>
<dbReference type="RefSeq" id="XP_005264010.2">
    <property type="nucleotide sequence ID" value="XM_005263953.3"/>
</dbReference>
<dbReference type="RefSeq" id="XP_047300461.1">
    <property type="nucleotide sequence ID" value="XM_047444505.1"/>
</dbReference>
<dbReference type="RefSeq" id="XP_047300462.1">
    <property type="nucleotide sequence ID" value="XM_047444506.1"/>
</dbReference>
<dbReference type="RefSeq" id="XP_054198253.1">
    <property type="nucleotide sequence ID" value="XM_054342278.1"/>
</dbReference>
<dbReference type="SMR" id="Q99743"/>
<dbReference type="BioGRID" id="110923">
    <property type="interactions" value="41"/>
</dbReference>
<dbReference type="CORUM" id="Q99743"/>
<dbReference type="DIP" id="DIP-60821N"/>
<dbReference type="FunCoup" id="Q99743">
    <property type="interactions" value="1825"/>
</dbReference>
<dbReference type="IntAct" id="Q99743">
    <property type="interactions" value="33"/>
</dbReference>
<dbReference type="STRING" id="9606.ENSP00000338283"/>
<dbReference type="iPTMnet" id="Q99743"/>
<dbReference type="PhosphoSitePlus" id="Q99743"/>
<dbReference type="BioMuta" id="NPAS2"/>
<dbReference type="DMDM" id="311033423"/>
<dbReference type="jPOST" id="Q99743"/>
<dbReference type="MassIVE" id="Q99743"/>
<dbReference type="PaxDb" id="9606-ENSP00000338283"/>
<dbReference type="PeptideAtlas" id="Q99743"/>
<dbReference type="ProteomicsDB" id="78454"/>
<dbReference type="Antibodypedia" id="32870">
    <property type="antibodies" value="237 antibodies from 31 providers"/>
</dbReference>
<dbReference type="DNASU" id="4862"/>
<dbReference type="Ensembl" id="ENST00000335681.10">
    <property type="protein sequence ID" value="ENSP00000338283.5"/>
    <property type="gene ID" value="ENSG00000170485.17"/>
</dbReference>
<dbReference type="GeneID" id="4862"/>
<dbReference type="KEGG" id="hsa:4862"/>
<dbReference type="MANE-Select" id="ENST00000335681.10">
    <property type="protein sequence ID" value="ENSP00000338283.5"/>
    <property type="RefSeq nucleotide sequence ID" value="NM_002518.4"/>
    <property type="RefSeq protein sequence ID" value="NP_002509.2"/>
</dbReference>
<dbReference type="UCSC" id="uc002tap.2">
    <property type="organism name" value="human"/>
</dbReference>
<dbReference type="AGR" id="HGNC:7895"/>
<dbReference type="CTD" id="4862"/>
<dbReference type="DisGeNET" id="4862"/>
<dbReference type="GeneCards" id="NPAS2"/>
<dbReference type="HGNC" id="HGNC:7895">
    <property type="gene designation" value="NPAS2"/>
</dbReference>
<dbReference type="HPA" id="ENSG00000170485">
    <property type="expression patterns" value="Low tissue specificity"/>
</dbReference>
<dbReference type="MIM" id="603347">
    <property type="type" value="gene"/>
</dbReference>
<dbReference type="MIM" id="608516">
    <property type="type" value="phenotype"/>
</dbReference>
<dbReference type="neXtProt" id="NX_Q99743"/>
<dbReference type="OpenTargets" id="ENSG00000170485"/>
<dbReference type="PharmGKB" id="PA31696"/>
<dbReference type="VEuPathDB" id="HostDB:ENSG00000170485"/>
<dbReference type="eggNOG" id="KOG3561">
    <property type="taxonomic scope" value="Eukaryota"/>
</dbReference>
<dbReference type="GeneTree" id="ENSGT00940000160744"/>
<dbReference type="HOGENOM" id="CLU_010044_2_2_1"/>
<dbReference type="InParanoid" id="Q99743"/>
<dbReference type="OMA" id="RPCRMPL"/>
<dbReference type="OrthoDB" id="411251at2759"/>
<dbReference type="PAN-GO" id="Q99743">
    <property type="GO annotations" value="5 GO annotations based on evolutionary models"/>
</dbReference>
<dbReference type="PhylomeDB" id="Q99743"/>
<dbReference type="TreeFam" id="TF324568"/>
<dbReference type="PathwayCommons" id="Q99743"/>
<dbReference type="Reactome" id="R-HSA-1368108">
    <property type="pathway name" value="BMAL1:CLOCK,NPAS2 activates circadian gene expression"/>
</dbReference>
<dbReference type="Reactome" id="R-HSA-1989781">
    <property type="pathway name" value="PPARA activates gene expression"/>
</dbReference>
<dbReference type="Reactome" id="R-HSA-400253">
    <property type="pathway name" value="Circadian Clock"/>
</dbReference>
<dbReference type="Reactome" id="R-HSA-9707616">
    <property type="pathway name" value="Heme signaling"/>
</dbReference>
<dbReference type="SignaLink" id="Q99743"/>
<dbReference type="SIGNOR" id="Q99743"/>
<dbReference type="BioGRID-ORCS" id="4862">
    <property type="hits" value="17 hits in 1172 CRISPR screens"/>
</dbReference>
<dbReference type="ChiTaRS" id="NPAS2">
    <property type="organism name" value="human"/>
</dbReference>
<dbReference type="GeneWiki" id="NPAS2"/>
<dbReference type="GenomeRNAi" id="4862"/>
<dbReference type="Pharos" id="Q99743">
    <property type="development level" value="Tbio"/>
</dbReference>
<dbReference type="PRO" id="PR:Q99743"/>
<dbReference type="Proteomes" id="UP000005640">
    <property type="component" value="Chromosome 2"/>
</dbReference>
<dbReference type="RNAct" id="Q99743">
    <property type="molecule type" value="protein"/>
</dbReference>
<dbReference type="Bgee" id="ENSG00000170485">
    <property type="expression patterns" value="Expressed in lower esophagus mucosa and 188 other cell types or tissues"/>
</dbReference>
<dbReference type="ExpressionAtlas" id="Q99743">
    <property type="expression patterns" value="baseline and differential"/>
</dbReference>
<dbReference type="GO" id="GO:0000785">
    <property type="term" value="C:chromatin"/>
    <property type="evidence" value="ECO:0000247"/>
    <property type="project" value="NTNU_SB"/>
</dbReference>
<dbReference type="GO" id="GO:1990513">
    <property type="term" value="C:CLOCK-BMAL transcription complex"/>
    <property type="evidence" value="ECO:0000318"/>
    <property type="project" value="GO_Central"/>
</dbReference>
<dbReference type="GO" id="GO:0005829">
    <property type="term" value="C:cytosol"/>
    <property type="evidence" value="ECO:0000314"/>
    <property type="project" value="HPA"/>
</dbReference>
<dbReference type="GO" id="GO:0005654">
    <property type="term" value="C:nucleoplasm"/>
    <property type="evidence" value="ECO:0000314"/>
    <property type="project" value="HPA"/>
</dbReference>
<dbReference type="GO" id="GO:0005634">
    <property type="term" value="C:nucleus"/>
    <property type="evidence" value="ECO:0000314"/>
    <property type="project" value="UniProtKB"/>
</dbReference>
<dbReference type="GO" id="GO:0003677">
    <property type="term" value="F:DNA binding"/>
    <property type="evidence" value="ECO:0000314"/>
    <property type="project" value="UniProtKB"/>
</dbReference>
<dbReference type="GO" id="GO:0003700">
    <property type="term" value="F:DNA-binding transcription factor activity"/>
    <property type="evidence" value="ECO:0000304"/>
    <property type="project" value="ProtInc"/>
</dbReference>
<dbReference type="GO" id="GO:0000981">
    <property type="term" value="F:DNA-binding transcription factor activity, RNA polymerase II-specific"/>
    <property type="evidence" value="ECO:0000247"/>
    <property type="project" value="NTNU_SB"/>
</dbReference>
<dbReference type="GO" id="GO:0051879">
    <property type="term" value="F:Hsp90 protein binding"/>
    <property type="evidence" value="ECO:0000314"/>
    <property type="project" value="BHF-UCL"/>
</dbReference>
<dbReference type="GO" id="GO:0046872">
    <property type="term" value="F:metal ion binding"/>
    <property type="evidence" value="ECO:0007669"/>
    <property type="project" value="UniProtKB-KW"/>
</dbReference>
<dbReference type="GO" id="GO:0046983">
    <property type="term" value="F:protein dimerization activity"/>
    <property type="evidence" value="ECO:0007669"/>
    <property type="project" value="InterPro"/>
</dbReference>
<dbReference type="GO" id="GO:0000978">
    <property type="term" value="F:RNA polymerase II cis-regulatory region sequence-specific DNA binding"/>
    <property type="evidence" value="ECO:0000250"/>
    <property type="project" value="UniProtKB"/>
</dbReference>
<dbReference type="GO" id="GO:1990837">
    <property type="term" value="F:sequence-specific double-stranded DNA binding"/>
    <property type="evidence" value="ECO:0000314"/>
    <property type="project" value="ARUK-UCL"/>
</dbReference>
<dbReference type="GO" id="GO:0007417">
    <property type="term" value="P:central nervous system development"/>
    <property type="evidence" value="ECO:0000304"/>
    <property type="project" value="ProtInc"/>
</dbReference>
<dbReference type="GO" id="GO:0032922">
    <property type="term" value="P:circadian regulation of gene expression"/>
    <property type="evidence" value="ECO:0000250"/>
    <property type="project" value="UniProtKB"/>
</dbReference>
<dbReference type="GO" id="GO:0006974">
    <property type="term" value="P:DNA damage response"/>
    <property type="evidence" value="ECO:0000315"/>
    <property type="project" value="UniProtKB"/>
</dbReference>
<dbReference type="GO" id="GO:2000987">
    <property type="term" value="P:positive regulation of behavioral fear response"/>
    <property type="evidence" value="ECO:0000250"/>
    <property type="project" value="UniProtKB"/>
</dbReference>
<dbReference type="GO" id="GO:0045739">
    <property type="term" value="P:positive regulation of DNA repair"/>
    <property type="evidence" value="ECO:0000315"/>
    <property type="project" value="UniProtKB"/>
</dbReference>
<dbReference type="GO" id="GO:0045893">
    <property type="term" value="P:positive regulation of DNA-templated transcription"/>
    <property type="evidence" value="ECO:0000314"/>
    <property type="project" value="UniProtKB"/>
</dbReference>
<dbReference type="GO" id="GO:0006357">
    <property type="term" value="P:regulation of transcription by RNA polymerase II"/>
    <property type="evidence" value="ECO:0000318"/>
    <property type="project" value="GO_Central"/>
</dbReference>
<dbReference type="GO" id="GO:0051775">
    <property type="term" value="P:response to redox state"/>
    <property type="evidence" value="ECO:0000314"/>
    <property type="project" value="UniProtKB"/>
</dbReference>
<dbReference type="GO" id="GO:0009410">
    <property type="term" value="P:response to xenobiotic stimulus"/>
    <property type="evidence" value="ECO:0000250"/>
    <property type="project" value="UniProtKB"/>
</dbReference>
<dbReference type="CDD" id="cd19737">
    <property type="entry name" value="bHLH-PAS_NPAS2_PASD4"/>
    <property type="match status" value="1"/>
</dbReference>
<dbReference type="CDD" id="cd00130">
    <property type="entry name" value="PAS"/>
    <property type="match status" value="2"/>
</dbReference>
<dbReference type="FunFam" id="3.30.450.20:FF:000016">
    <property type="entry name" value="Circadian locomoter output cycles protein"/>
    <property type="match status" value="1"/>
</dbReference>
<dbReference type="FunFam" id="4.10.280.10:FF:000013">
    <property type="entry name" value="Circadian locomoter output cycles protein kaput"/>
    <property type="match status" value="1"/>
</dbReference>
<dbReference type="FunFam" id="3.30.450.20:FF:000022">
    <property type="entry name" value="circadian locomoter output cycles protein kaput"/>
    <property type="match status" value="1"/>
</dbReference>
<dbReference type="Gene3D" id="4.10.280.10">
    <property type="entry name" value="Helix-loop-helix DNA-binding domain"/>
    <property type="match status" value="1"/>
</dbReference>
<dbReference type="Gene3D" id="3.30.450.20">
    <property type="entry name" value="PAS domain"/>
    <property type="match status" value="2"/>
</dbReference>
<dbReference type="InterPro" id="IPR011598">
    <property type="entry name" value="bHLH_dom"/>
</dbReference>
<dbReference type="InterPro" id="IPR047230">
    <property type="entry name" value="CLOCK-like"/>
</dbReference>
<dbReference type="InterPro" id="IPR036638">
    <property type="entry name" value="HLH_DNA-bd_sf"/>
</dbReference>
<dbReference type="InterPro" id="IPR001067">
    <property type="entry name" value="Nuc_translocat"/>
</dbReference>
<dbReference type="InterPro" id="IPR001610">
    <property type="entry name" value="PAC"/>
</dbReference>
<dbReference type="InterPro" id="IPR000014">
    <property type="entry name" value="PAS"/>
</dbReference>
<dbReference type="InterPro" id="IPR035965">
    <property type="entry name" value="PAS-like_dom_sf"/>
</dbReference>
<dbReference type="InterPro" id="IPR013767">
    <property type="entry name" value="PAS_fold"/>
</dbReference>
<dbReference type="NCBIfam" id="TIGR00229">
    <property type="entry name" value="sensory_box"/>
    <property type="match status" value="1"/>
</dbReference>
<dbReference type="PANTHER" id="PTHR46055">
    <property type="entry name" value="CIRCADIAN LOCOMOTER OUTPUT CYCLES PROTEIN KAPUT"/>
    <property type="match status" value="1"/>
</dbReference>
<dbReference type="PANTHER" id="PTHR46055:SF1">
    <property type="entry name" value="NEURONAL PAS DOMAIN-CONTAINING PROTEIN 2"/>
    <property type="match status" value="1"/>
</dbReference>
<dbReference type="Pfam" id="PF00010">
    <property type="entry name" value="HLH"/>
    <property type="match status" value="1"/>
</dbReference>
<dbReference type="Pfam" id="PF00989">
    <property type="entry name" value="PAS"/>
    <property type="match status" value="1"/>
</dbReference>
<dbReference type="Pfam" id="PF14598">
    <property type="entry name" value="PAS_11"/>
    <property type="match status" value="1"/>
</dbReference>
<dbReference type="PRINTS" id="PR00785">
    <property type="entry name" value="NCTRNSLOCATR"/>
</dbReference>
<dbReference type="SMART" id="SM00353">
    <property type="entry name" value="HLH"/>
    <property type="match status" value="1"/>
</dbReference>
<dbReference type="SMART" id="SM00086">
    <property type="entry name" value="PAC"/>
    <property type="match status" value="1"/>
</dbReference>
<dbReference type="SMART" id="SM00091">
    <property type="entry name" value="PAS"/>
    <property type="match status" value="2"/>
</dbReference>
<dbReference type="SUPFAM" id="SSF47459">
    <property type="entry name" value="HLH, helix-loop-helix DNA-binding domain"/>
    <property type="match status" value="1"/>
</dbReference>
<dbReference type="SUPFAM" id="SSF55785">
    <property type="entry name" value="PYP-like sensor domain (PAS domain)"/>
    <property type="match status" value="2"/>
</dbReference>
<dbReference type="PROSITE" id="PS50888">
    <property type="entry name" value="BHLH"/>
    <property type="match status" value="1"/>
</dbReference>
<dbReference type="PROSITE" id="PS50112">
    <property type="entry name" value="PAS"/>
    <property type="match status" value="2"/>
</dbReference>
<comment type="function">
    <text evidence="1 5 6 7 11 12">Transcriptional activator which forms a core component of the circadian clock. The circadian clock, an internal time-keeping system, regulates various physiological processes through the generation of approximately 24 hour circadian rhythms in gene expression, which are translated into rhythms in metabolism and behavior. It is derived from the Latin roots 'circa' (about) and 'diem' (day) and acts as an important regulator of a wide array of physiological functions including metabolism, sleep, body temperature, blood pressure, endocrine, immune, cardiovascular, and renal function. Consists of two major components: the central clock, residing in the suprachiasmatic nucleus (SCN) of the brain, and the peripheral clocks that are present in nearly every tissue and organ system. Both the central and peripheral clocks can be reset by environmental cues, also known as Zeitgebers (German for 'timegivers'). The predominant Zeitgeber for the central clock is light, which is sensed by retina and signals directly to the SCN. The central clock entrains the peripheral clocks through neuronal and hormonal signals, body temperature and feeding-related cues, aligning all clocks with the external light/dark cycle. Circadian rhythms allow an organism to achieve temporal homeostasis with its environment at the molecular level by regulating gene expression to create a peak of protein expression once every 24 hours to control when a particular physiological process is most active with respect to the solar day. Transcription and translation of core clock components (CLOCK, NPAS2, BMAL1, BMAL2, PER1, PER2, PER3, CRY1 and CRY2) plays a critical role in rhythm generation, whereas delays imposed by post-translational modifications (PTMs) are important for determining the period (tau) of the rhythms (tau refers to the period of a rhythm and is the length, in time, of one complete cycle). A diurnal rhythm is synchronized with the day/night cycle, while the ultradian and infradian rhythms have a period shorter and longer than 24 hours, respectively. Disruptions in the circadian rhythms contribute to the pathology of cardiovascular diseases, cancer, metabolic syndromes and aging. A transcription/translation feedback loop (TTFL) forms the core of the molecular circadian clock mechanism. Transcription factors, CLOCK or NPAS2 and BMAL1 or BMAL2, form the positive limb of the feedback loop, act in the form of a heterodimer and activate the transcription of core clock genes and clock-controlled genes (involved in key metabolic processes), harboring E-box elements (5'-CACGTG-3') within their promoters. The core clock genes: PER1/2/3 and CRY1/2 which are transcriptional repressors form the negative limb of the feedback loop and interact with the CLOCK|NPAS2-BMAL1|BMAL2 heterodimer inhibiting its activity and thereby negatively regulating their own expression. This heterodimer also activates nuclear receptors NR1D1/2 and RORA/B/G, which form a second feedback loop and which activate and repress BMAL1 transcription, respectively. The NPAS2-BMAL1 heterodimer positively regulates the expression of MAOA, F7 and LDHA and modulates the circadian rhythm of daytime contrast sensitivity by regulating the rhythmic expression of adenylate cyclase type 1 (ADCY1) in the retina. NPAS2 plays an important role in sleep homeostasis and in maintaining circadian behaviors in normal light/dark and feeding conditions and in the effective synchronization of feeding behavior with scheduled food availability. Regulates the gene transcription of key metabolic pathways in the liver and is involved in DNA damage response by regulating several cell cycle and DNA repair genes. Controls the circadian rhythm of NR0B2 expression by binding rhythmically to its promoter (By similarity). Mediates the diurnal variation in the expression of GABARA1 receptor in the brain and contributes to the regulation of anxiety-like behaviors and GABAergic neurotransmission in the ventral striatum (By similarity).</text>
</comment>
<comment type="cofactor">
    <cofactor evidence="1">
        <name>heme</name>
        <dbReference type="ChEBI" id="CHEBI:30413"/>
    </cofactor>
</comment>
<comment type="activity regulation">
    <text evidence="1">Carbon monoxide (CO) and the redox state of the cell can modulate the transcriptional activity of the NPAS2-BMAL1 heterodimer. NADH and NADPH enhance the DNA-binding activity of the heterodimer whereas CO binds the heme group in NPAS2 and inhibits the DNA-binding activity of the heterodimer.</text>
</comment>
<comment type="subunit">
    <text evidence="7">Component of the circadian clock oscillator which includes the CRY proteins, CLOCK or NPAS2, BMAL1 or BMAL2, CSNK1D and/or CSNK1E, TIMELESS and the PER proteins. Efficient DNA binding requires dimerization with another bHLH protein. Forms a heterodimer with BMAL1 and this heterodimerization is required for E-box-dependent transactivation. Interacts with NCOA3, KAT2B, CREBBP and EP300.</text>
</comment>
<comment type="interaction">
    <interactant intactId="EBI-3932727">
        <id>Q99743</id>
    </interactant>
    <interactant intactId="EBI-1794206">
        <id>O00327</id>
        <label>BMAL1</label>
    </interactant>
    <organismsDiffer>false</organismsDiffer>
    <experiments>4</experiments>
</comment>
<comment type="interaction">
    <interactant intactId="EBI-3932727">
        <id>Q99743</id>
    </interactant>
    <interactant intactId="EBI-11991546">
        <id>O00327-8</id>
        <label>BMAL1</label>
    </interactant>
    <organismsDiffer>false</organismsDiffer>
    <experiments>10</experiments>
</comment>
<comment type="interaction">
    <interactant intactId="EBI-3932727">
        <id>Q99743</id>
    </interactant>
    <interactant intactId="EBI-12268276">
        <id>Q8WYA1-3</id>
        <label>BMAL2</label>
    </interactant>
    <organismsDiffer>false</organismsDiffer>
    <experiments>10</experiments>
</comment>
<comment type="interaction">
    <interactant intactId="EBI-3932727">
        <id>Q99743</id>
    </interactant>
    <interactant intactId="EBI-953896">
        <id>Q9NP55</id>
        <label>BPIFA1</label>
    </interactant>
    <organismsDiffer>false</organismsDiffer>
    <experiments>3</experiments>
</comment>
<comment type="interaction">
    <interactant intactId="EBI-3932727">
        <id>Q99743</id>
    </interactant>
    <interactant intactId="EBI-348399">
        <id>P22607</id>
        <label>FGFR3</label>
    </interactant>
    <organismsDiffer>false</organismsDiffer>
    <experiments>3</experiments>
</comment>
<comment type="interaction">
    <interactant intactId="EBI-3932727">
        <id>Q99743</id>
    </interactant>
    <interactant intactId="EBI-8285963">
        <id>Q14957</id>
        <label>GRIN2C</label>
    </interactant>
    <organismsDiffer>false</organismsDiffer>
    <experiments>3</experiments>
</comment>
<comment type="interaction">
    <interactant intactId="EBI-3932727">
        <id>Q99743</id>
    </interactant>
    <interactant intactId="EBI-6509505">
        <id>Q0VD86</id>
        <label>INCA1</label>
    </interactant>
    <organismsDiffer>false</organismsDiffer>
    <experiments>3</experiments>
</comment>
<comment type="interaction">
    <interactant intactId="EBI-3932727">
        <id>Q99743</id>
    </interactant>
    <interactant intactId="EBI-713635">
        <id>O43639</id>
        <label>NCK2</label>
    </interactant>
    <organismsDiffer>false</organismsDiffer>
    <experiments>6</experiments>
</comment>
<comment type="interaction">
    <interactant intactId="EBI-3932727">
        <id>Q99743</id>
    </interactant>
    <interactant intactId="EBI-6165879">
        <id>Q96IV0</id>
        <label>NGLY1</label>
    </interactant>
    <organismsDiffer>false</organismsDiffer>
    <experiments>3</experiments>
</comment>
<comment type="interaction">
    <interactant intactId="EBI-3932727">
        <id>Q99743</id>
    </interactant>
    <interactant intactId="EBI-2514383">
        <id>Q5T6F2</id>
        <label>UBAP2</label>
    </interactant>
    <organismsDiffer>false</organismsDiffer>
    <experiments>3</experiments>
</comment>
<comment type="interaction">
    <interactant intactId="EBI-3932727">
        <id>Q99743</id>
    </interactant>
    <interactant intactId="EBI-25900580">
        <id>Q9Y649</id>
    </interactant>
    <organismsDiffer>false</organismsDiffer>
    <experiments>3</experiments>
</comment>
<comment type="subcellular location">
    <subcellularLocation>
        <location evidence="3 7">Nucleus</location>
    </subcellularLocation>
</comment>
<comment type="polymorphism">
    <text evidence="13">Variants in NPAS2 show a susceptibility to seasonal affective disorder (SAD) [MIM:608516]. SAD is a depressive condition resulting from seasonal changes, and with diurnal preference.</text>
</comment>
<name>NPAS2_HUMAN</name>
<organism>
    <name type="scientific">Homo sapiens</name>
    <name type="common">Human</name>
    <dbReference type="NCBI Taxonomy" id="9606"/>
    <lineage>
        <taxon>Eukaryota</taxon>
        <taxon>Metazoa</taxon>
        <taxon>Chordata</taxon>
        <taxon>Craniata</taxon>
        <taxon>Vertebrata</taxon>
        <taxon>Euteleostomi</taxon>
        <taxon>Mammalia</taxon>
        <taxon>Eutheria</taxon>
        <taxon>Euarchontoglires</taxon>
        <taxon>Primates</taxon>
        <taxon>Haplorrhini</taxon>
        <taxon>Catarrhini</taxon>
        <taxon>Hominidae</taxon>
        <taxon>Homo</taxon>
    </lineage>
</organism>
<reference key="1">
    <citation type="journal article" date="1997" name="Proc. Natl. Acad. Sci. U.S.A.">
        <title>Molecular characterization of two mammalian bHLH-PAS domain proteins selectively expressed in the central nervous system.</title>
        <authorList>
            <person name="Zhou Y.-D."/>
            <person name="Barnard M."/>
            <person name="Tian H."/>
            <person name="Li X."/>
            <person name="Ring H.Z."/>
            <person name="Francke U."/>
            <person name="Shelton J."/>
            <person name="Richardson J."/>
            <person name="Russell D.W."/>
            <person name="McKnight S.L."/>
        </authorList>
    </citation>
    <scope>NUCLEOTIDE SEQUENCE [MRNA]</scope>
    <scope>VARIANTS ALA-394 AND LEU-471</scope>
</reference>
<reference key="2">
    <citation type="journal article" date="2005" name="Nature">
        <title>Generation and annotation of the DNA sequences of human chromosomes 2 and 4.</title>
        <authorList>
            <person name="Hillier L.W."/>
            <person name="Graves T.A."/>
            <person name="Fulton R.S."/>
            <person name="Fulton L.A."/>
            <person name="Pepin K.H."/>
            <person name="Minx P."/>
            <person name="Wagner-McPherson C."/>
            <person name="Layman D."/>
            <person name="Wylie K."/>
            <person name="Sekhon M."/>
            <person name="Becker M.C."/>
            <person name="Fewell G.A."/>
            <person name="Delehaunty K.D."/>
            <person name="Miner T.L."/>
            <person name="Nash W.E."/>
            <person name="Kremitzki C."/>
            <person name="Oddy L."/>
            <person name="Du H."/>
            <person name="Sun H."/>
            <person name="Bradshaw-Cordum H."/>
            <person name="Ali J."/>
            <person name="Carter J."/>
            <person name="Cordes M."/>
            <person name="Harris A."/>
            <person name="Isak A."/>
            <person name="van Brunt A."/>
            <person name="Nguyen C."/>
            <person name="Du F."/>
            <person name="Courtney L."/>
            <person name="Kalicki J."/>
            <person name="Ozersky P."/>
            <person name="Abbott S."/>
            <person name="Armstrong J."/>
            <person name="Belter E.A."/>
            <person name="Caruso L."/>
            <person name="Cedroni M."/>
            <person name="Cotton M."/>
            <person name="Davidson T."/>
            <person name="Desai A."/>
            <person name="Elliott G."/>
            <person name="Erb T."/>
            <person name="Fronick C."/>
            <person name="Gaige T."/>
            <person name="Haakenson W."/>
            <person name="Haglund K."/>
            <person name="Holmes A."/>
            <person name="Harkins R."/>
            <person name="Kim K."/>
            <person name="Kruchowski S.S."/>
            <person name="Strong C.M."/>
            <person name="Grewal N."/>
            <person name="Goyea E."/>
            <person name="Hou S."/>
            <person name="Levy A."/>
            <person name="Martinka S."/>
            <person name="Mead K."/>
            <person name="McLellan M.D."/>
            <person name="Meyer R."/>
            <person name="Randall-Maher J."/>
            <person name="Tomlinson C."/>
            <person name="Dauphin-Kohlberg S."/>
            <person name="Kozlowicz-Reilly A."/>
            <person name="Shah N."/>
            <person name="Swearengen-Shahid S."/>
            <person name="Snider J."/>
            <person name="Strong J.T."/>
            <person name="Thompson J."/>
            <person name="Yoakum M."/>
            <person name="Leonard S."/>
            <person name="Pearman C."/>
            <person name="Trani L."/>
            <person name="Radionenko M."/>
            <person name="Waligorski J.E."/>
            <person name="Wang C."/>
            <person name="Rock S.M."/>
            <person name="Tin-Wollam A.-M."/>
            <person name="Maupin R."/>
            <person name="Latreille P."/>
            <person name="Wendl M.C."/>
            <person name="Yang S.-P."/>
            <person name="Pohl C."/>
            <person name="Wallis J.W."/>
            <person name="Spieth J."/>
            <person name="Bieri T.A."/>
            <person name="Berkowicz N."/>
            <person name="Nelson J.O."/>
            <person name="Osborne J."/>
            <person name="Ding L."/>
            <person name="Meyer R."/>
            <person name="Sabo A."/>
            <person name="Shotland Y."/>
            <person name="Sinha P."/>
            <person name="Wohldmann P.E."/>
            <person name="Cook L.L."/>
            <person name="Hickenbotham M.T."/>
            <person name="Eldred J."/>
            <person name="Williams D."/>
            <person name="Jones T.A."/>
            <person name="She X."/>
            <person name="Ciccarelli F.D."/>
            <person name="Izaurralde E."/>
            <person name="Taylor J."/>
            <person name="Schmutz J."/>
            <person name="Myers R.M."/>
            <person name="Cox D.R."/>
            <person name="Huang X."/>
            <person name="McPherson J.D."/>
            <person name="Mardis E.R."/>
            <person name="Clifton S.W."/>
            <person name="Warren W.C."/>
            <person name="Chinwalla A.T."/>
            <person name="Eddy S.R."/>
            <person name="Marra M.A."/>
            <person name="Ovcharenko I."/>
            <person name="Furey T.S."/>
            <person name="Miller W."/>
            <person name="Eichler E.E."/>
            <person name="Bork P."/>
            <person name="Suyama M."/>
            <person name="Torrents D."/>
            <person name="Waterston R.H."/>
            <person name="Wilson R.K."/>
        </authorList>
    </citation>
    <scope>NUCLEOTIDE SEQUENCE [LARGE SCALE GENOMIC DNA]</scope>
</reference>
<reference key="3">
    <citation type="journal article" date="2004" name="Genome Res.">
        <title>The status, quality, and expansion of the NIH full-length cDNA project: the Mammalian Gene Collection (MGC).</title>
        <authorList>
            <consortium name="The MGC Project Team"/>
        </authorList>
    </citation>
    <scope>NUCLEOTIDE SEQUENCE [LARGE SCALE MRNA]</scope>
    <scope>VARIANT ALA-394</scope>
    <source>
        <tissue>Lung</tissue>
    </source>
</reference>
<reference key="4">
    <citation type="journal article" date="1997" name="J. Biol. Chem.">
        <title>Characterization of a subset of the basic-helix-loop-helix-PAS superfamily that interacts with components of the dioxin signaling pathway.</title>
        <authorList>
            <person name="Hogenesch J.B."/>
            <person name="Chan W.K."/>
            <person name="Jackiw V.H."/>
            <person name="Brown R.C."/>
            <person name="Gu Y.-Z."/>
            <person name="Pray-Grant M."/>
            <person name="Perdew G.H."/>
            <person name="Bradfield C.A."/>
        </authorList>
    </citation>
    <scope>NUCLEOTIDE SEQUENCE [MRNA] OF 1-626</scope>
    <scope>VARIANT ALA-394</scope>
</reference>
<reference key="5">
    <citation type="journal article" date="2001" name="Science">
        <title>NPAS2: an analog of clock operative in the mammalian forebrain.</title>
        <authorList>
            <person name="Reick M."/>
            <person name="Garcia J.A."/>
            <person name="Dudley C."/>
            <person name="McKnight S.L."/>
        </authorList>
    </citation>
    <scope>FUNCTION</scope>
</reference>
<reference key="6">
    <citation type="journal article" date="2001" name="Science">
        <title>Regulation of clock and NPAS2 DNA binding by the redox state of NAD cofactors.</title>
        <authorList>
            <person name="Rutter J."/>
            <person name="Reick M."/>
            <person name="Wu L.C."/>
            <person name="McKnight S.L."/>
        </authorList>
    </citation>
    <scope>FUNCTION</scope>
    <scope>DNA-BINDING</scope>
</reference>
<reference key="7">
    <citation type="journal article" date="2004" name="J. Biol. Chem.">
        <title>Histone acetyltransferase-dependent chromatin remodeling and the vascular clock.</title>
        <authorList>
            <person name="Curtis A.M."/>
            <person name="Seo S.B."/>
            <person name="Westgate E.J."/>
            <person name="Rudic R.D."/>
            <person name="Smyth E.M."/>
            <person name="Chakravarti D."/>
            <person name="FitzGerald G.A."/>
            <person name="McNamara P."/>
        </authorList>
    </citation>
    <scope>FUNCTION</scope>
    <scope>SUBCELLULAR LOCATION</scope>
    <scope>INTERACTION WITH NCOA3; KAT2B; CREBBP AND EP300</scope>
</reference>
<reference key="8">
    <citation type="journal article" date="2008" name="Curr. Biol.">
        <title>Regulation of monoamine oxidase A by circadian-clock components implies clock influence on mood.</title>
        <authorList>
            <person name="Hampp G."/>
            <person name="Ripperger J.A."/>
            <person name="Houben T."/>
            <person name="Schmutz I."/>
            <person name="Blex C."/>
            <person name="Perreau-Lenz S."/>
            <person name="Brunk I."/>
            <person name="Spanagel R."/>
            <person name="Ahnert-Hilger G."/>
            <person name="Meijer J.H."/>
            <person name="Albrecht U."/>
        </authorList>
    </citation>
    <scope>FUNCTION</scope>
</reference>
<reference key="9">
    <citation type="journal article" date="2008" name="Mol. Cancer Res.">
        <title>The circadian gene NPAS2, a putative tumor suppressor, is involved in DNA damage response.</title>
        <authorList>
            <person name="Hoffman A.E."/>
            <person name="Zheng T."/>
            <person name="Ba Y."/>
            <person name="Zhu Y."/>
        </authorList>
    </citation>
    <scope>FUNCTION</scope>
</reference>
<reference key="10">
    <citation type="journal article" date="2013" name="Physiol. Rev.">
        <title>Metabolism and the circadian clock converge.</title>
        <authorList>
            <person name="Eckel-Mahan K."/>
            <person name="Sassone-Corsi P."/>
        </authorList>
    </citation>
    <scope>REVIEW</scope>
</reference>
<reference key="11">
    <citation type="journal article" date="2003" name="Neuropsychopharmacology">
        <title>Circadian clock-related polymorphisms in seasonal affective disorder and their relevance to diurnal preference.</title>
        <authorList>
            <person name="Johansson C."/>
            <person name="Willeit M."/>
            <person name="Smedh C."/>
            <person name="Ekholm J."/>
            <person name="Paunio T."/>
            <person name="Kieseppa T."/>
            <person name="Lichtermann D."/>
            <person name="Praschak-Rieder N."/>
            <person name="Neumeister A."/>
            <person name="Nilsson L.G."/>
            <person name="Kasper S."/>
            <person name="Peltonen L."/>
            <person name="Adolfsson R."/>
            <person name="Schalling M."/>
            <person name="Partonen T."/>
        </authorList>
    </citation>
    <scope>ASSOCIATION OF VARIANT LEU-471 WITH SAD</scope>
</reference>
<reference key="12">
    <citation type="journal article" date="2007" name="Int. J. Cancer">
        <title>Ala394Thr polymorphism in the clock gene NPAS2: a circadian modifier for the risk of non-Hodgkin's lymphoma.</title>
        <authorList>
            <person name="Zhu Y."/>
            <person name="Leaderer D."/>
            <person name="Guss C."/>
            <person name="Brown H.N."/>
            <person name="Zhang Y."/>
            <person name="Boyle P."/>
            <person name="Stevens R.G."/>
            <person name="Hoffman A."/>
            <person name="Qin Q."/>
            <person name="Han X."/>
            <person name="Zheng T."/>
        </authorList>
    </citation>
    <scope>VARIANT ALA-394</scope>
</reference>
<reference key="13">
    <citation type="journal article" date="2008" name="Breast Cancer Res. Treat.">
        <title>Non-synonymous polymorphisms in the circadian gene NPAS2 and breast cancer risk.</title>
        <authorList>
            <person name="Zhu Y."/>
            <person name="Stevens R.G."/>
            <person name="Leaderer D."/>
            <person name="Hoffman A."/>
            <person name="Holford T."/>
            <person name="Zhang Y."/>
            <person name="Brown H.N."/>
            <person name="Zheng T."/>
        </authorList>
    </citation>
    <scope>VARIANT ALA-394</scope>
</reference>
<proteinExistence type="evidence at protein level"/>
<feature type="chain" id="PRO_0000127406" description="Neuronal PAS domain-containing protein 2">
    <location>
        <begin position="1"/>
        <end position="824"/>
    </location>
</feature>
<feature type="domain" description="bHLH" evidence="3">
    <location>
        <begin position="9"/>
        <end position="59"/>
    </location>
</feature>
<feature type="domain" description="PAS 1" evidence="2">
    <location>
        <begin position="82"/>
        <end position="152"/>
    </location>
</feature>
<feature type="domain" description="PAS 2" evidence="2">
    <location>
        <begin position="237"/>
        <end position="307"/>
    </location>
</feature>
<feature type="domain" description="PAC">
    <location>
        <begin position="311"/>
        <end position="354"/>
    </location>
</feature>
<feature type="region of interest" description="Sufficient for heterodimer formation with BMAL1, E-box binding and for the effect of NADPH" evidence="1">
    <location>
        <begin position="1"/>
        <end position="61"/>
    </location>
</feature>
<feature type="region of interest" description="Disordered" evidence="4">
    <location>
        <begin position="1"/>
        <end position="21"/>
    </location>
</feature>
<feature type="region of interest" description="Disordered" evidence="4">
    <location>
        <begin position="367"/>
        <end position="437"/>
    </location>
</feature>
<feature type="region of interest" description="Disordered" evidence="4">
    <location>
        <begin position="556"/>
        <end position="667"/>
    </location>
</feature>
<feature type="region of interest" description="Disordered" evidence="4">
    <location>
        <begin position="681"/>
        <end position="704"/>
    </location>
</feature>
<feature type="region of interest" description="Disordered" evidence="4">
    <location>
        <begin position="739"/>
        <end position="824"/>
    </location>
</feature>
<feature type="compositionally biased region" description="Basic and acidic residues" evidence="4">
    <location>
        <begin position="1"/>
        <end position="10"/>
    </location>
</feature>
<feature type="compositionally biased region" description="Basic and acidic residues" evidence="4">
    <location>
        <begin position="378"/>
        <end position="390"/>
    </location>
</feature>
<feature type="compositionally biased region" description="Polar residues" evidence="4">
    <location>
        <begin position="421"/>
        <end position="431"/>
    </location>
</feature>
<feature type="compositionally biased region" description="Low complexity" evidence="4">
    <location>
        <begin position="559"/>
        <end position="576"/>
    </location>
</feature>
<feature type="compositionally biased region" description="Polar residues" evidence="4">
    <location>
        <begin position="587"/>
        <end position="610"/>
    </location>
</feature>
<feature type="compositionally biased region" description="Low complexity" evidence="4">
    <location>
        <begin position="614"/>
        <end position="636"/>
    </location>
</feature>
<feature type="compositionally biased region" description="Polar residues" evidence="4">
    <location>
        <begin position="645"/>
        <end position="664"/>
    </location>
</feature>
<feature type="compositionally biased region" description="Polar residues" evidence="4">
    <location>
        <begin position="694"/>
        <end position="704"/>
    </location>
</feature>
<feature type="compositionally biased region" description="Low complexity" evidence="4">
    <location>
        <begin position="739"/>
        <end position="760"/>
    </location>
</feature>
<feature type="compositionally biased region" description="Polar residues" evidence="4">
    <location>
        <begin position="766"/>
        <end position="789"/>
    </location>
</feature>
<feature type="compositionally biased region" description="Pro residues" evidence="4">
    <location>
        <begin position="794"/>
        <end position="805"/>
    </location>
</feature>
<feature type="compositionally biased region" description="Low complexity" evidence="4">
    <location>
        <begin position="809"/>
        <end position="824"/>
    </location>
</feature>
<feature type="binding site" description="axial binding residue" evidence="1">
    <location>
        <position position="119"/>
    </location>
    <ligand>
        <name>heme b</name>
        <dbReference type="ChEBI" id="CHEBI:60344"/>
    </ligand>
    <ligandPart>
        <name>Fe</name>
        <dbReference type="ChEBI" id="CHEBI:18248"/>
    </ligandPart>
</feature>
<feature type="binding site" description="axial binding residue" evidence="1">
    <location>
        <position position="171"/>
    </location>
    <ligand>
        <name>heme b</name>
        <dbReference type="ChEBI" id="CHEBI:60344"/>
    </ligand>
    <ligandPart>
        <name>Fe</name>
        <dbReference type="ChEBI" id="CHEBI:18248"/>
    </ligandPart>
</feature>
<feature type="sequence variant" id="VAR_029078" description="Probable risk factor for non-Hodgkin's lymphoma and breast cancer; dbSNP:rs2305160." evidence="8 9 10 13 14">
    <original>T</original>
    <variation>A</variation>
    <location>
        <position position="394"/>
    </location>
</feature>
<feature type="sequence variant" id="VAR_029079" description="Susceptibility to seasonal affective disorder (SAD) and diurnal preference; dbSNP:rs11541353." evidence="13">
    <original>S</original>
    <variation>L</variation>
    <location>
        <position position="471"/>
    </location>
</feature>
<feature type="sequence conflict" description="In Ref. 4; AAC51211." evidence="15" ref="4">
    <original>K</original>
    <variation>E</variation>
    <location>
        <position position="51"/>
    </location>
</feature>
<feature type="sequence conflict" description="In Ref. 4; AAC51211." evidence="15" ref="4">
    <original>S</original>
    <variation>G</variation>
    <location>
        <position position="164"/>
    </location>
</feature>
<feature type="sequence conflict" description="In Ref. 1; AAB47250." evidence="15" ref="1">
    <original>K</original>
    <variation>T</variation>
    <location>
        <position position="308"/>
    </location>
</feature>
<protein>
    <recommendedName>
        <fullName>Neuronal PAS domain-containing protein 2</fullName>
        <shortName>Neuronal PAS2</shortName>
    </recommendedName>
    <alternativeName>
        <fullName>Basic-helix-loop-helix-PAS protein MOP4</fullName>
    </alternativeName>
    <alternativeName>
        <fullName>Class E basic helix-loop-helix protein 9</fullName>
        <shortName>bHLHe9</shortName>
    </alternativeName>
    <alternativeName>
        <fullName>Member of PAS protein 4</fullName>
    </alternativeName>
    <alternativeName>
        <fullName>PAS domain-containing protein 4</fullName>
    </alternativeName>
</protein>
<accession>Q99743</accession>
<accession>Q4ZFV9</accession>
<accession>Q53SQ3</accession>
<accession>Q86V96</accession>
<accession>Q99629</accession>
<evidence type="ECO:0000250" key="1">
    <source>
        <dbReference type="UniProtKB" id="P97460"/>
    </source>
</evidence>
<evidence type="ECO:0000255" key="2">
    <source>
        <dbReference type="PROSITE-ProRule" id="PRU00140"/>
    </source>
</evidence>
<evidence type="ECO:0000255" key="3">
    <source>
        <dbReference type="PROSITE-ProRule" id="PRU00981"/>
    </source>
</evidence>
<evidence type="ECO:0000256" key="4">
    <source>
        <dbReference type="SAM" id="MobiDB-lite"/>
    </source>
</evidence>
<evidence type="ECO:0000269" key="5">
    <source>
    </source>
</evidence>
<evidence type="ECO:0000269" key="6">
    <source>
    </source>
</evidence>
<evidence type="ECO:0000269" key="7">
    <source>
    </source>
</evidence>
<evidence type="ECO:0000269" key="8">
    <source>
    </source>
</evidence>
<evidence type="ECO:0000269" key="9">
    <source>
    </source>
</evidence>
<evidence type="ECO:0000269" key="10">
    <source>
    </source>
</evidence>
<evidence type="ECO:0000269" key="11">
    <source>
    </source>
</evidence>
<evidence type="ECO:0000269" key="12">
    <source>
    </source>
</evidence>
<evidence type="ECO:0000269" key="13">
    <source>
    </source>
</evidence>
<evidence type="ECO:0000269" key="14">
    <source>
    </source>
</evidence>
<evidence type="ECO:0000305" key="15"/>
<keyword id="KW-0010">Activator</keyword>
<keyword id="KW-0090">Biological rhythms</keyword>
<keyword id="KW-0227">DNA damage</keyword>
<keyword id="KW-0238">DNA-binding</keyword>
<keyword id="KW-0349">Heme</keyword>
<keyword id="KW-0408">Iron</keyword>
<keyword id="KW-0479">Metal-binding</keyword>
<keyword id="KW-0539">Nucleus</keyword>
<keyword id="KW-1267">Proteomics identification</keyword>
<keyword id="KW-1185">Reference proteome</keyword>
<keyword id="KW-0677">Repeat</keyword>
<keyword id="KW-0804">Transcription</keyword>
<keyword id="KW-0805">Transcription regulation</keyword>
<sequence length="824" mass="91791">MDEDEKDRAKRASRNKSEKKRRDQFNVLIKELSSMLPGNTRKMDKTTVLEKVIGFLQKHNEVSAQTEICDIQQDWKPSFLSNEEFTQLMLEALDGFIIAVTTDGSIIYVSDSITPLLGHLPSDVMDQNLLNFLPEQEHSEVYKILSSHMLVTDSPSPEYLKSDSDLEFYCHLLRGSLNPKEFPTYEYIKFVGNFRSYNNVPSPSCNGFDNTLSRPCRVPLGKEVCFIATVRLATPQFLKEMCIVDEPLEEFTSRHSLEWKFLFLDHRAPPIIGYLPFEVLGTSGYDYYHIDDLELLARCHQHLMQFGKGKSCCYRFLTKGQQWIWLQTHYYITYHQWNSKPEFIVCTHSVVSYADVRVERRQELALEDPPSEALHSSALKDKGSSLEPRQHFNTLDVGASGLNTSHSPSASSRSSHKSSHTAMSEPTSTPTKLMAEASTPALPRSATLPQELPVPGLSQAATMPAPLPSPSSCDLTQQLLPQTVLQSTPAPMAQFSAQFSMFQTIKDQLEQRTRILQANIRWQQEELHKIQEQLCLVQDSNVQMFLQQPAVSLSFSSTQRPEAQQQLQQRSAAVTQPQLGAGPQLPGQISSAQVTSQHLLRESSVISTQGPKPMRSSQLMQSSGRSGSSLVSPFSSATAALPPSLNLTTPASTSQDASQCQPSPDFSHDRQLRLLLSQPIQPMMPGSCDARQPSEVSRTGRQVKYAQSQTVFQNPDAHPANSSSAPMPVLLMGQAVLHPSFPASQPSPLQPAQARQQPPQHYLQVQAPTSLHSEQQDSLLLSTYSQQPGTLGYPQPPPAQPQPLRPPRRVSSLSESSGLQQPPR</sequence>